<name>NA1C3_BUNCN</name>
<organism>
    <name type="scientific">Bunodosoma cangicum</name>
    <name type="common">Sea anemone</name>
    <dbReference type="NCBI Taxonomy" id="138296"/>
    <lineage>
        <taxon>Eukaryota</taxon>
        <taxon>Metazoa</taxon>
        <taxon>Cnidaria</taxon>
        <taxon>Anthozoa</taxon>
        <taxon>Hexacorallia</taxon>
        <taxon>Actiniaria</taxon>
        <taxon>Actiniidae</taxon>
        <taxon>Bunodosoma</taxon>
    </lineage>
</organism>
<evidence type="ECO:0000250" key="1"/>
<evidence type="ECO:0000269" key="2">
    <source>
    </source>
</evidence>
<evidence type="ECO:0000303" key="3">
    <source>
    </source>
</evidence>
<evidence type="ECO:0000303" key="4">
    <source>
    </source>
</evidence>
<evidence type="ECO:0000305" key="5"/>
<accession>P0C7Q0</accession>
<comment type="function">
    <text evidence="2">Binds specifically to voltage-gated sodium channels SCN1A/Nav1.1, thereby delaying their inactivation during signal transduction.</text>
</comment>
<comment type="subcellular location">
    <subcellularLocation>
        <location evidence="2">Secreted</location>
    </subcellularLocation>
    <subcellularLocation>
        <location evidence="2">Nematocyst</location>
    </subcellularLocation>
</comment>
<comment type="mass spectrometry"/>
<comment type="similarity">
    <text evidence="5">Belongs to the sea anemone sodium channel inhibitory toxin family. Type I subfamily.</text>
</comment>
<keyword id="KW-0903">Direct protein sequencing</keyword>
<keyword id="KW-1015">Disulfide bond</keyword>
<keyword id="KW-0872">Ion channel impairing toxin</keyword>
<keyword id="KW-0166">Nematocyst</keyword>
<keyword id="KW-0528">Neurotoxin</keyword>
<keyword id="KW-0964">Secreted</keyword>
<keyword id="KW-0800">Toxin</keyword>
<keyword id="KW-0738">Voltage-gated sodium channel impairing toxin</keyword>
<protein>
    <recommendedName>
        <fullName evidence="4">Delta-actitoxin-Bcg1c</fullName>
        <shortName evidence="4">Delta-AITX-Bcg1c</shortName>
    </recommendedName>
    <alternativeName>
        <fullName evidence="3">Cangitoxin III</fullName>
    </alternativeName>
    <alternativeName>
        <fullName evidence="5">Cangitoxin-3</fullName>
    </alternativeName>
    <alternativeName>
        <fullName>Cangitoxin-III</fullName>
        <shortName evidence="3">CGTX-III</shortName>
    </alternativeName>
</protein>
<sequence>GVACRCDSDGPTVHGDSLSGTLWLTGGCPSGWHNCRGSGPFIGYCCKK</sequence>
<feature type="chain" id="PRO_0000342624" description="Delta-actitoxin-Bcg1c" evidence="2">
    <location>
        <begin position="1"/>
        <end position="48"/>
    </location>
</feature>
<feature type="disulfide bond" evidence="1">
    <location>
        <begin position="4"/>
        <end position="45"/>
    </location>
</feature>
<feature type="disulfide bond" evidence="1">
    <location>
        <begin position="6"/>
        <end position="35"/>
    </location>
</feature>
<feature type="disulfide bond" evidence="1">
    <location>
        <begin position="28"/>
        <end position="46"/>
    </location>
</feature>
<dbReference type="SMR" id="P0C7Q0"/>
<dbReference type="GO" id="GO:0005576">
    <property type="term" value="C:extracellular region"/>
    <property type="evidence" value="ECO:0007669"/>
    <property type="project" value="UniProtKB-SubCell"/>
</dbReference>
<dbReference type="GO" id="GO:0042151">
    <property type="term" value="C:nematocyst"/>
    <property type="evidence" value="ECO:0007669"/>
    <property type="project" value="UniProtKB-SubCell"/>
</dbReference>
<dbReference type="GO" id="GO:0017080">
    <property type="term" value="F:sodium channel regulator activity"/>
    <property type="evidence" value="ECO:0007669"/>
    <property type="project" value="UniProtKB-KW"/>
</dbReference>
<dbReference type="GO" id="GO:0090729">
    <property type="term" value="F:toxin activity"/>
    <property type="evidence" value="ECO:0007669"/>
    <property type="project" value="UniProtKB-KW"/>
</dbReference>
<dbReference type="GO" id="GO:0009966">
    <property type="term" value="P:regulation of signal transduction"/>
    <property type="evidence" value="ECO:0007669"/>
    <property type="project" value="InterPro"/>
</dbReference>
<dbReference type="Gene3D" id="2.20.20.10">
    <property type="entry name" value="Anthopleurin-A"/>
    <property type="match status" value="1"/>
</dbReference>
<dbReference type="InterPro" id="IPR000693">
    <property type="entry name" value="Anenome_toxin"/>
</dbReference>
<dbReference type="InterPro" id="IPR023355">
    <property type="entry name" value="Myo_ane_neurotoxin_sf"/>
</dbReference>
<dbReference type="Pfam" id="PF00706">
    <property type="entry name" value="Toxin_4"/>
    <property type="match status" value="1"/>
</dbReference>
<dbReference type="PIRSF" id="PIRSF001905">
    <property type="entry name" value="Anenome_toxin"/>
    <property type="match status" value="1"/>
</dbReference>
<dbReference type="SUPFAM" id="SSF57392">
    <property type="entry name" value="Defensin-like"/>
    <property type="match status" value="1"/>
</dbReference>
<proteinExistence type="evidence at protein level"/>
<reference key="1">
    <citation type="journal article" date="2008" name="Toxicon">
        <title>Revisiting cangitoxin, a sea anemone peptide: purification and characterization of cangitoxins II and III from the venom of Bunodosoma cangicum.</title>
        <authorList>
            <person name="Zaharenko A.J."/>
            <person name="Ferreira W.A. Jr."/>
            <person name="de Oliveira J.S."/>
            <person name="Konno K."/>
            <person name="Richardson M."/>
            <person name="Schiavon E."/>
            <person name="Wanke E."/>
            <person name="de Freitas J.C."/>
        </authorList>
    </citation>
    <scope>PROTEIN SEQUENCE</scope>
    <scope>FUNCTION</scope>
    <scope>MASS SPECTROMETRY</scope>
    <source>
        <tissue>Nematoblast</tissue>
    </source>
</reference>
<reference key="2">
    <citation type="journal article" date="2012" name="Toxicon">
        <title>Development of a rational nomenclature for naming peptide and protein toxins from sea anemones.</title>
        <authorList>
            <person name="Oliveira J.S."/>
            <person name="Fuentes-Silva D."/>
            <person name="King G.F."/>
        </authorList>
    </citation>
    <scope>NOMENCLATURE</scope>
</reference>